<reference key="1">
    <citation type="journal article" date="2000" name="Science">
        <title>The genome sequence of Drosophila melanogaster.</title>
        <authorList>
            <person name="Adams M.D."/>
            <person name="Celniker S.E."/>
            <person name="Holt R.A."/>
            <person name="Evans C.A."/>
            <person name="Gocayne J.D."/>
            <person name="Amanatides P.G."/>
            <person name="Scherer S.E."/>
            <person name="Li P.W."/>
            <person name="Hoskins R.A."/>
            <person name="Galle R.F."/>
            <person name="George R.A."/>
            <person name="Lewis S.E."/>
            <person name="Richards S."/>
            <person name="Ashburner M."/>
            <person name="Henderson S.N."/>
            <person name="Sutton G.G."/>
            <person name="Wortman J.R."/>
            <person name="Yandell M.D."/>
            <person name="Zhang Q."/>
            <person name="Chen L.X."/>
            <person name="Brandon R.C."/>
            <person name="Rogers Y.-H.C."/>
            <person name="Blazej R.G."/>
            <person name="Champe M."/>
            <person name="Pfeiffer B.D."/>
            <person name="Wan K.H."/>
            <person name="Doyle C."/>
            <person name="Baxter E.G."/>
            <person name="Helt G."/>
            <person name="Nelson C.R."/>
            <person name="Miklos G.L.G."/>
            <person name="Abril J.F."/>
            <person name="Agbayani A."/>
            <person name="An H.-J."/>
            <person name="Andrews-Pfannkoch C."/>
            <person name="Baldwin D."/>
            <person name="Ballew R.M."/>
            <person name="Basu A."/>
            <person name="Baxendale J."/>
            <person name="Bayraktaroglu L."/>
            <person name="Beasley E.M."/>
            <person name="Beeson K.Y."/>
            <person name="Benos P.V."/>
            <person name="Berman B.P."/>
            <person name="Bhandari D."/>
            <person name="Bolshakov S."/>
            <person name="Borkova D."/>
            <person name="Botchan M.R."/>
            <person name="Bouck J."/>
            <person name="Brokstein P."/>
            <person name="Brottier P."/>
            <person name="Burtis K.C."/>
            <person name="Busam D.A."/>
            <person name="Butler H."/>
            <person name="Cadieu E."/>
            <person name="Center A."/>
            <person name="Chandra I."/>
            <person name="Cherry J.M."/>
            <person name="Cawley S."/>
            <person name="Dahlke C."/>
            <person name="Davenport L.B."/>
            <person name="Davies P."/>
            <person name="de Pablos B."/>
            <person name="Delcher A."/>
            <person name="Deng Z."/>
            <person name="Mays A.D."/>
            <person name="Dew I."/>
            <person name="Dietz S.M."/>
            <person name="Dodson K."/>
            <person name="Doup L.E."/>
            <person name="Downes M."/>
            <person name="Dugan-Rocha S."/>
            <person name="Dunkov B.C."/>
            <person name="Dunn P."/>
            <person name="Durbin K.J."/>
            <person name="Evangelista C.C."/>
            <person name="Ferraz C."/>
            <person name="Ferriera S."/>
            <person name="Fleischmann W."/>
            <person name="Fosler C."/>
            <person name="Gabrielian A.E."/>
            <person name="Garg N.S."/>
            <person name="Gelbart W.M."/>
            <person name="Glasser K."/>
            <person name="Glodek A."/>
            <person name="Gong F."/>
            <person name="Gorrell J.H."/>
            <person name="Gu Z."/>
            <person name="Guan P."/>
            <person name="Harris M."/>
            <person name="Harris N.L."/>
            <person name="Harvey D.A."/>
            <person name="Heiman T.J."/>
            <person name="Hernandez J.R."/>
            <person name="Houck J."/>
            <person name="Hostin D."/>
            <person name="Houston K.A."/>
            <person name="Howland T.J."/>
            <person name="Wei M.-H."/>
            <person name="Ibegwam C."/>
            <person name="Jalali M."/>
            <person name="Kalush F."/>
            <person name="Karpen G.H."/>
            <person name="Ke Z."/>
            <person name="Kennison J.A."/>
            <person name="Ketchum K.A."/>
            <person name="Kimmel B.E."/>
            <person name="Kodira C.D."/>
            <person name="Kraft C.L."/>
            <person name="Kravitz S."/>
            <person name="Kulp D."/>
            <person name="Lai Z."/>
            <person name="Lasko P."/>
            <person name="Lei Y."/>
            <person name="Levitsky A.A."/>
            <person name="Li J.H."/>
            <person name="Li Z."/>
            <person name="Liang Y."/>
            <person name="Lin X."/>
            <person name="Liu X."/>
            <person name="Mattei B."/>
            <person name="McIntosh T.C."/>
            <person name="McLeod M.P."/>
            <person name="McPherson D."/>
            <person name="Merkulov G."/>
            <person name="Milshina N.V."/>
            <person name="Mobarry C."/>
            <person name="Morris J."/>
            <person name="Moshrefi A."/>
            <person name="Mount S.M."/>
            <person name="Moy M."/>
            <person name="Murphy B."/>
            <person name="Murphy L."/>
            <person name="Muzny D.M."/>
            <person name="Nelson D.L."/>
            <person name="Nelson D.R."/>
            <person name="Nelson K.A."/>
            <person name="Nixon K."/>
            <person name="Nusskern D.R."/>
            <person name="Pacleb J.M."/>
            <person name="Palazzolo M."/>
            <person name="Pittman G.S."/>
            <person name="Pan S."/>
            <person name="Pollard J."/>
            <person name="Puri V."/>
            <person name="Reese M.G."/>
            <person name="Reinert K."/>
            <person name="Remington K."/>
            <person name="Saunders R.D.C."/>
            <person name="Scheeler F."/>
            <person name="Shen H."/>
            <person name="Shue B.C."/>
            <person name="Siden-Kiamos I."/>
            <person name="Simpson M."/>
            <person name="Skupski M.P."/>
            <person name="Smith T.J."/>
            <person name="Spier E."/>
            <person name="Spradling A.C."/>
            <person name="Stapleton M."/>
            <person name="Strong R."/>
            <person name="Sun E."/>
            <person name="Svirskas R."/>
            <person name="Tector C."/>
            <person name="Turner R."/>
            <person name="Venter E."/>
            <person name="Wang A.H."/>
            <person name="Wang X."/>
            <person name="Wang Z.-Y."/>
            <person name="Wassarman D.A."/>
            <person name="Weinstock G.M."/>
            <person name="Weissenbach J."/>
            <person name="Williams S.M."/>
            <person name="Woodage T."/>
            <person name="Worley K.C."/>
            <person name="Wu D."/>
            <person name="Yang S."/>
            <person name="Yao Q.A."/>
            <person name="Ye J."/>
            <person name="Yeh R.-F."/>
            <person name="Zaveri J.S."/>
            <person name="Zhan M."/>
            <person name="Zhang G."/>
            <person name="Zhao Q."/>
            <person name="Zheng L."/>
            <person name="Zheng X.H."/>
            <person name="Zhong F.N."/>
            <person name="Zhong W."/>
            <person name="Zhou X."/>
            <person name="Zhu S.C."/>
            <person name="Zhu X."/>
            <person name="Smith H.O."/>
            <person name="Gibbs R.A."/>
            <person name="Myers E.W."/>
            <person name="Rubin G.M."/>
            <person name="Venter J.C."/>
        </authorList>
    </citation>
    <scope>NUCLEOTIDE SEQUENCE [LARGE SCALE GENOMIC DNA]</scope>
    <source>
        <strain>Berkeley</strain>
    </source>
</reference>
<reference key="2">
    <citation type="journal article" date="2002" name="Genome Biol.">
        <title>Annotation of the Drosophila melanogaster euchromatic genome: a systematic review.</title>
        <authorList>
            <person name="Misra S."/>
            <person name="Crosby M.A."/>
            <person name="Mungall C.J."/>
            <person name="Matthews B.B."/>
            <person name="Campbell K.S."/>
            <person name="Hradecky P."/>
            <person name="Huang Y."/>
            <person name="Kaminker J.S."/>
            <person name="Millburn G.H."/>
            <person name="Prochnik S.E."/>
            <person name="Smith C.D."/>
            <person name="Tupy J.L."/>
            <person name="Whitfield E.J."/>
            <person name="Bayraktaroglu L."/>
            <person name="Berman B.P."/>
            <person name="Bettencourt B.R."/>
            <person name="Celniker S.E."/>
            <person name="de Grey A.D.N.J."/>
            <person name="Drysdale R.A."/>
            <person name="Harris N.L."/>
            <person name="Richter J."/>
            <person name="Russo S."/>
            <person name="Schroeder A.J."/>
            <person name="Shu S.Q."/>
            <person name="Stapleton M."/>
            <person name="Yamada C."/>
            <person name="Ashburner M."/>
            <person name="Gelbart W.M."/>
            <person name="Rubin G.M."/>
            <person name="Lewis S.E."/>
        </authorList>
    </citation>
    <scope>GENOME REANNOTATION</scope>
    <source>
        <strain>Berkeley</strain>
    </source>
</reference>
<reference key="3">
    <citation type="submission" date="2003-02" db="EMBL/GenBank/DDBJ databases">
        <authorList>
            <person name="Stapleton M."/>
            <person name="Brokstein P."/>
            <person name="Hong L."/>
            <person name="Agbayani A."/>
            <person name="Carlson J.W."/>
            <person name="Champe M."/>
            <person name="Chavez C."/>
            <person name="Dorsett V."/>
            <person name="Dresnek D."/>
            <person name="Farfan D."/>
            <person name="Frise E."/>
            <person name="George R.A."/>
            <person name="Gonzalez M."/>
            <person name="Guarin H."/>
            <person name="Kronmiller B."/>
            <person name="Li P.W."/>
            <person name="Liao G."/>
            <person name="Miranda A."/>
            <person name="Mungall C.J."/>
            <person name="Nunoo J."/>
            <person name="Pacleb J.M."/>
            <person name="Paragas V."/>
            <person name="Park S."/>
            <person name="Patel S."/>
            <person name="Phouanenavong S."/>
            <person name="Wan K.H."/>
            <person name="Yu C."/>
            <person name="Lewis S.E."/>
            <person name="Rubin G.M."/>
            <person name="Celniker S.E."/>
        </authorList>
    </citation>
    <scope>NUCLEOTIDE SEQUENCE [LARGE SCALE MRNA]</scope>
    <source>
        <strain>Berkeley</strain>
        <tissue>Embryo</tissue>
    </source>
</reference>
<reference key="4">
    <citation type="journal article" date="2006" name="Dev. Cell">
        <title>Mitotic activation of the kinase Aurora-A requires its binding partner Bora.</title>
        <authorList>
            <person name="Hutterer A."/>
            <person name="Berdnik D."/>
            <person name="Wirtz-Peitz F."/>
            <person name="Zigman M."/>
            <person name="Schleiffer A."/>
            <person name="Knoblich J.A."/>
        </authorList>
    </citation>
    <scope>FUNCTION</scope>
    <scope>PHOSPHORYLATION</scope>
    <scope>SUBCELLULAR LOCATION</scope>
    <scope>INTERACTION WITH AUR</scope>
</reference>
<reference key="5">
    <citation type="journal article" date="2008" name="J. Proteome Res.">
        <title>Phosphoproteome analysis of Drosophila melanogaster embryos.</title>
        <authorList>
            <person name="Zhai B."/>
            <person name="Villen J."/>
            <person name="Beausoleil S.A."/>
            <person name="Mintseris J."/>
            <person name="Gygi S.P."/>
        </authorList>
    </citation>
    <scope>PHOSPHORYLATION [LARGE SCALE ANALYSIS] AT SER-383</scope>
    <scope>IDENTIFICATION BY MASS SPECTROMETRY</scope>
    <source>
        <tissue>Embryo</tissue>
    </source>
</reference>
<dbReference type="EMBL" id="AE014296">
    <property type="protein sequence ID" value="AAF49248.1"/>
    <property type="molecule type" value="Genomic_DNA"/>
</dbReference>
<dbReference type="EMBL" id="AY070548">
    <property type="protein sequence ID" value="AAL48019.1"/>
    <property type="molecule type" value="mRNA"/>
</dbReference>
<dbReference type="RefSeq" id="NP_649048.1">
    <property type="nucleotide sequence ID" value="NM_140791.3"/>
</dbReference>
<dbReference type="BioGRID" id="65312">
    <property type="interactions" value="5"/>
</dbReference>
<dbReference type="FunCoup" id="Q9VVR2">
    <property type="interactions" value="292"/>
</dbReference>
<dbReference type="IntAct" id="Q9VVR2">
    <property type="interactions" value="5"/>
</dbReference>
<dbReference type="STRING" id="7227.FBpp0074874"/>
<dbReference type="iPTMnet" id="Q9VVR2"/>
<dbReference type="PaxDb" id="7227-FBpp0074874"/>
<dbReference type="DNASU" id="40031"/>
<dbReference type="EnsemblMetazoa" id="FBtr0075108">
    <property type="protein sequence ID" value="FBpp0074874"/>
    <property type="gene ID" value="FBgn0259791"/>
</dbReference>
<dbReference type="GeneID" id="40031"/>
<dbReference type="KEGG" id="dme:Dmel_CG6897"/>
<dbReference type="AGR" id="FB:FBgn0259791"/>
<dbReference type="CTD" id="79866"/>
<dbReference type="FlyBase" id="FBgn0259791">
    <property type="gene designation" value="bora"/>
</dbReference>
<dbReference type="VEuPathDB" id="VectorBase:FBgn0259791"/>
<dbReference type="eggNOG" id="ENOG502S85H">
    <property type="taxonomic scope" value="Eukaryota"/>
</dbReference>
<dbReference type="GeneTree" id="ENSGT00390000013790"/>
<dbReference type="HOGENOM" id="CLU_464825_0_0_1"/>
<dbReference type="InParanoid" id="Q9VVR2"/>
<dbReference type="OMA" id="QTMFAGR"/>
<dbReference type="OrthoDB" id="10020858at2759"/>
<dbReference type="PhylomeDB" id="Q9VVR2"/>
<dbReference type="Reactome" id="R-DME-2565942">
    <property type="pathway name" value="Regulation of PLK1 Activity at G2/M Transition"/>
</dbReference>
<dbReference type="BioGRID-ORCS" id="40031">
    <property type="hits" value="1 hit in 1 CRISPR screen"/>
</dbReference>
<dbReference type="GenomeRNAi" id="40031"/>
<dbReference type="PRO" id="PR:Q9VVR2"/>
<dbReference type="Proteomes" id="UP000000803">
    <property type="component" value="Chromosome 3L"/>
</dbReference>
<dbReference type="Bgee" id="FBgn0259791">
    <property type="expression patterns" value="Expressed in head epidermis primordium (Drosophila) and 46 other cell types or tissues"/>
</dbReference>
<dbReference type="GO" id="GO:0005737">
    <property type="term" value="C:cytoplasm"/>
    <property type="evidence" value="ECO:0000314"/>
    <property type="project" value="UniProtKB"/>
</dbReference>
<dbReference type="GO" id="GO:0005634">
    <property type="term" value="C:nucleus"/>
    <property type="evidence" value="ECO:0000314"/>
    <property type="project" value="UniProtKB"/>
</dbReference>
<dbReference type="GO" id="GO:0019901">
    <property type="term" value="F:protein kinase binding"/>
    <property type="evidence" value="ECO:0000318"/>
    <property type="project" value="GO_Central"/>
</dbReference>
<dbReference type="GO" id="GO:0032147">
    <property type="term" value="P:activation of protein kinase activity"/>
    <property type="evidence" value="ECO:0000314"/>
    <property type="project" value="UniProtKB"/>
</dbReference>
<dbReference type="GO" id="GO:0045167">
    <property type="term" value="P:asymmetric protein localization involved in cell fate determination"/>
    <property type="evidence" value="ECO:0000315"/>
    <property type="project" value="FlyBase"/>
</dbReference>
<dbReference type="GO" id="GO:0051301">
    <property type="term" value="P:cell division"/>
    <property type="evidence" value="ECO:0007669"/>
    <property type="project" value="UniProtKB-KW"/>
</dbReference>
<dbReference type="GO" id="GO:0007088">
    <property type="term" value="P:regulation of mitotic nuclear division"/>
    <property type="evidence" value="ECO:0000318"/>
    <property type="project" value="GO_Central"/>
</dbReference>
<dbReference type="GO" id="GO:0060236">
    <property type="term" value="P:regulation of mitotic spindle organization"/>
    <property type="evidence" value="ECO:0000318"/>
    <property type="project" value="GO_Central"/>
</dbReference>
<dbReference type="InterPro" id="IPR023252">
    <property type="entry name" value="Aurora_borealis_protein"/>
</dbReference>
<dbReference type="PANTHER" id="PTHR14728">
    <property type="entry name" value="PROTEIN AURORA BOREALIS"/>
    <property type="match status" value="1"/>
</dbReference>
<dbReference type="PANTHER" id="PTHR14728:SF2">
    <property type="entry name" value="PROTEIN AURORA BOREALIS"/>
    <property type="match status" value="1"/>
</dbReference>
<dbReference type="Pfam" id="PF15280">
    <property type="entry name" value="BORA_N"/>
    <property type="match status" value="1"/>
</dbReference>
<dbReference type="PRINTS" id="PR02038">
    <property type="entry name" value="AURORABORA"/>
</dbReference>
<name>BORA_DROME</name>
<feature type="chain" id="PRO_0000273210" description="Protein aurora borealis">
    <location>
        <begin position="1"/>
        <end position="539"/>
    </location>
</feature>
<feature type="region of interest" description="Disordered" evidence="1">
    <location>
        <begin position="23"/>
        <end position="70"/>
    </location>
</feature>
<feature type="region of interest" description="Disordered" evidence="1">
    <location>
        <begin position="398"/>
        <end position="499"/>
    </location>
</feature>
<feature type="compositionally biased region" description="Low complexity" evidence="1">
    <location>
        <begin position="32"/>
        <end position="43"/>
    </location>
</feature>
<feature type="compositionally biased region" description="Polar residues" evidence="1">
    <location>
        <begin position="44"/>
        <end position="63"/>
    </location>
</feature>
<feature type="compositionally biased region" description="Acidic residues" evidence="1">
    <location>
        <begin position="408"/>
        <end position="428"/>
    </location>
</feature>
<feature type="compositionally biased region" description="Low complexity" evidence="1">
    <location>
        <begin position="433"/>
        <end position="444"/>
    </location>
</feature>
<feature type="compositionally biased region" description="Polar residues" evidence="1">
    <location>
        <begin position="458"/>
        <end position="467"/>
    </location>
</feature>
<feature type="modified residue" description="Phosphoserine" evidence="3">
    <location>
        <position position="383"/>
    </location>
</feature>
<keyword id="KW-0131">Cell cycle</keyword>
<keyword id="KW-0132">Cell division</keyword>
<keyword id="KW-0963">Cytoplasm</keyword>
<keyword id="KW-0498">Mitosis</keyword>
<keyword id="KW-0539">Nucleus</keyword>
<keyword id="KW-0597">Phosphoprotein</keyword>
<keyword id="KW-1185">Reference proteome</keyword>
<protein>
    <recommendedName>
        <fullName>Protein aurora borealis</fullName>
    </recommendedName>
</protein>
<evidence type="ECO:0000256" key="1">
    <source>
        <dbReference type="SAM" id="MobiDB-lite"/>
    </source>
</evidence>
<evidence type="ECO:0000269" key="2">
    <source>
    </source>
</evidence>
<evidence type="ECO:0000269" key="3">
    <source>
    </source>
</evidence>
<evidence type="ECO:0000305" key="4"/>
<organism>
    <name type="scientific">Drosophila melanogaster</name>
    <name type="common">Fruit fly</name>
    <dbReference type="NCBI Taxonomy" id="7227"/>
    <lineage>
        <taxon>Eukaryota</taxon>
        <taxon>Metazoa</taxon>
        <taxon>Ecdysozoa</taxon>
        <taxon>Arthropoda</taxon>
        <taxon>Hexapoda</taxon>
        <taxon>Insecta</taxon>
        <taxon>Pterygota</taxon>
        <taxon>Neoptera</taxon>
        <taxon>Endopterygota</taxon>
        <taxon>Diptera</taxon>
        <taxon>Brachycera</taxon>
        <taxon>Muscomorpha</taxon>
        <taxon>Ephydroidea</taxon>
        <taxon>Drosophilidae</taxon>
        <taxon>Drosophila</taxon>
        <taxon>Sophophora</taxon>
    </lineage>
</organism>
<accession>Q9VVR2</accession>
<gene>
    <name type="primary">bora</name>
    <name type="ORF">CG6897</name>
</gene>
<sequence length="539" mass="59142">MYNDEVRTPQALKNRYITNVNGLKCRARRNSHSNSSNSSAASATPTNGGKENGKYSPQMSGNVCTPPPKRLHKVRNPFEGAMADRLHLPLIASPSLFRSRTPQLSSTQFEWNIDEVSQLKPADVEPHETQFHDSPDPEQESKAQLAISAFFKESLIVPSPVDCPLRKQRIILNCSEDNTPISNKSRRMRDCEVQTELTLPPILPKALEDALRPYFQPHLAGRLSGRSKSSGGPDIFNSSMRRKLFDLHNVIVLGEQDTAEPSRSMVGSSPQGKQTMFAGRLSDSASGESSFGCLSPIRNLCGLPPGTPDNGTCSGKRKLLMHELELPSPIAPSEHLSRRLVHSKVEISVTEQHDTLSERTALKFTPDRSSSPMGGGLEHSDCSINQRVRRLRVNSTRQVVIETGDQPLFEETEGEEEEAESEDDEEADAMQLSTVSFNCSSSNSDTPRGHKRHRSAQRKNLSQSFSANLEEEADQTQGGAGSIQPAEPPSVAMPQQGARIPLYRADSGFNETSSTTFAFSQDLPLDVSMACCSTPSTRS</sequence>
<comment type="function">
    <text evidence="2">Required for the activation of Aurora-A (aur) at the onset of mitosis.</text>
</comment>
<comment type="subunit">
    <text evidence="2">Interacts with aur.</text>
</comment>
<comment type="interaction">
    <interactant intactId="EBI-193067">
        <id>Q9VVR2</id>
    </interactant>
    <interactant intactId="EBI-154834">
        <id>Q9VGF9</id>
        <label>aurA</label>
    </interactant>
    <organismsDiffer>false</organismsDiffer>
    <experiments>3</experiments>
</comment>
<comment type="interaction">
    <interactant intactId="EBI-193067">
        <id>Q9VVR2</id>
    </interactant>
    <interactant intactId="EBI-156442">
        <id>Q24117</id>
        <label>ctp</label>
    </interactant>
    <organismsDiffer>false</organismsDiffer>
    <experiments>3</experiments>
</comment>
<comment type="subcellular location">
    <subcellularLocation>
        <location evidence="2">Cytoplasm</location>
    </subcellularLocation>
    <subcellularLocation>
        <location evidence="2">Nucleus</location>
    </subcellularLocation>
    <text>Shuttles between the cytoplasm and the nucleus. In interphase cells, it is nuclear. Upon entry into mitosis, it is excluded from the nucleus and translocates into the cytoplasm in a Cdk1-dependent manner.</text>
</comment>
<comment type="PTM">
    <text evidence="2 3">Phosphorylated by aur.</text>
</comment>
<comment type="similarity">
    <text evidence="4">Belongs to the BORA family.</text>
</comment>
<proteinExistence type="evidence at protein level"/>